<dbReference type="EC" id="2.6.99.2" evidence="1"/>
<dbReference type="EMBL" id="CP000487">
    <property type="protein sequence ID" value="ABK82370.1"/>
    <property type="molecule type" value="Genomic_DNA"/>
</dbReference>
<dbReference type="RefSeq" id="WP_011731911.1">
    <property type="nucleotide sequence ID" value="NC_008599.1"/>
</dbReference>
<dbReference type="SMR" id="A0RNS2"/>
<dbReference type="KEGG" id="cff:CFF8240_0680"/>
<dbReference type="eggNOG" id="COG0854">
    <property type="taxonomic scope" value="Bacteria"/>
</dbReference>
<dbReference type="HOGENOM" id="CLU_074563_0_0_7"/>
<dbReference type="UniPathway" id="UPA00244">
    <property type="reaction ID" value="UER00313"/>
</dbReference>
<dbReference type="Proteomes" id="UP000000760">
    <property type="component" value="Chromosome"/>
</dbReference>
<dbReference type="GO" id="GO:0005829">
    <property type="term" value="C:cytosol"/>
    <property type="evidence" value="ECO:0007669"/>
    <property type="project" value="TreeGrafter"/>
</dbReference>
<dbReference type="GO" id="GO:0033856">
    <property type="term" value="F:pyridoxine 5'-phosphate synthase activity"/>
    <property type="evidence" value="ECO:0007669"/>
    <property type="project" value="UniProtKB-EC"/>
</dbReference>
<dbReference type="GO" id="GO:0008615">
    <property type="term" value="P:pyridoxine biosynthetic process"/>
    <property type="evidence" value="ECO:0007669"/>
    <property type="project" value="UniProtKB-UniRule"/>
</dbReference>
<dbReference type="CDD" id="cd00003">
    <property type="entry name" value="PNPsynthase"/>
    <property type="match status" value="1"/>
</dbReference>
<dbReference type="Gene3D" id="3.20.20.70">
    <property type="entry name" value="Aldolase class I"/>
    <property type="match status" value="1"/>
</dbReference>
<dbReference type="HAMAP" id="MF_00279">
    <property type="entry name" value="PdxJ"/>
    <property type="match status" value="1"/>
</dbReference>
<dbReference type="InterPro" id="IPR013785">
    <property type="entry name" value="Aldolase_TIM"/>
</dbReference>
<dbReference type="InterPro" id="IPR004569">
    <property type="entry name" value="PyrdxlP_synth_PdxJ"/>
</dbReference>
<dbReference type="InterPro" id="IPR036130">
    <property type="entry name" value="Pyridoxine-5'_phos_synth"/>
</dbReference>
<dbReference type="NCBIfam" id="TIGR00559">
    <property type="entry name" value="pdxJ"/>
    <property type="match status" value="1"/>
</dbReference>
<dbReference type="NCBIfam" id="NF003625">
    <property type="entry name" value="PRK05265.1-3"/>
    <property type="match status" value="1"/>
</dbReference>
<dbReference type="NCBIfam" id="NF003627">
    <property type="entry name" value="PRK05265.1-5"/>
    <property type="match status" value="1"/>
</dbReference>
<dbReference type="PANTHER" id="PTHR30456">
    <property type="entry name" value="PYRIDOXINE 5'-PHOSPHATE SYNTHASE"/>
    <property type="match status" value="1"/>
</dbReference>
<dbReference type="PANTHER" id="PTHR30456:SF0">
    <property type="entry name" value="PYRIDOXINE 5'-PHOSPHATE SYNTHASE"/>
    <property type="match status" value="1"/>
</dbReference>
<dbReference type="Pfam" id="PF03740">
    <property type="entry name" value="PdxJ"/>
    <property type="match status" value="1"/>
</dbReference>
<dbReference type="SUPFAM" id="SSF63892">
    <property type="entry name" value="Pyridoxine 5'-phosphate synthase"/>
    <property type="match status" value="1"/>
</dbReference>
<comment type="function">
    <text evidence="1">Catalyzes the complicated ring closure reaction between the two acyclic compounds 1-deoxy-D-xylulose-5-phosphate (DXP) and 3-amino-2-oxopropyl phosphate (1-amino-acetone-3-phosphate or AAP) to form pyridoxine 5'-phosphate (PNP) and inorganic phosphate.</text>
</comment>
<comment type="catalytic activity">
    <reaction evidence="1">
        <text>3-amino-2-oxopropyl phosphate + 1-deoxy-D-xylulose 5-phosphate = pyridoxine 5'-phosphate + phosphate + 2 H2O + H(+)</text>
        <dbReference type="Rhea" id="RHEA:15265"/>
        <dbReference type="ChEBI" id="CHEBI:15377"/>
        <dbReference type="ChEBI" id="CHEBI:15378"/>
        <dbReference type="ChEBI" id="CHEBI:43474"/>
        <dbReference type="ChEBI" id="CHEBI:57279"/>
        <dbReference type="ChEBI" id="CHEBI:57792"/>
        <dbReference type="ChEBI" id="CHEBI:58589"/>
        <dbReference type="EC" id="2.6.99.2"/>
    </reaction>
</comment>
<comment type="pathway">
    <text evidence="1">Cofactor biosynthesis; pyridoxine 5'-phosphate biosynthesis; pyridoxine 5'-phosphate from D-erythrose 4-phosphate: step 5/5.</text>
</comment>
<comment type="subunit">
    <text evidence="1">Homooctamer; tetramer of dimers.</text>
</comment>
<comment type="subcellular location">
    <subcellularLocation>
        <location evidence="1">Cytoplasm</location>
    </subcellularLocation>
</comment>
<comment type="similarity">
    <text evidence="1">Belongs to the PNP synthase family.</text>
</comment>
<sequence>MKLGVNIDHVAVLREARAVNDPQIIHAMFEAVSGGADQITIHLREDRRHINEDDVKNIINLSPIPVNLECSINSEIIDIVCELKPHRATIVPEKREELTTEGGLSLDSLNLKNVISKLNDNDIKVSLFINPKKNDVIMSKELGATCVELHTGAYANTFLMLNSNLNHTKYKIDNLNLKRGELEILLNSELTRIKEAANISTNLGLEVAAGHGLNYQNVTAISSIKDIFELNIGQSIVAKSVFVGLKNAVKEMMELVK</sequence>
<evidence type="ECO:0000255" key="1">
    <source>
        <dbReference type="HAMAP-Rule" id="MF_00279"/>
    </source>
</evidence>
<name>PDXJ_CAMFF</name>
<organism>
    <name type="scientific">Campylobacter fetus subsp. fetus (strain 82-40)</name>
    <dbReference type="NCBI Taxonomy" id="360106"/>
    <lineage>
        <taxon>Bacteria</taxon>
        <taxon>Pseudomonadati</taxon>
        <taxon>Campylobacterota</taxon>
        <taxon>Epsilonproteobacteria</taxon>
        <taxon>Campylobacterales</taxon>
        <taxon>Campylobacteraceae</taxon>
        <taxon>Campylobacter</taxon>
    </lineage>
</organism>
<gene>
    <name evidence="1" type="primary">pdxJ</name>
    <name type="ordered locus">CFF8240_0680</name>
</gene>
<proteinExistence type="inferred from homology"/>
<feature type="chain" id="PRO_1000022365" description="Pyridoxine 5'-phosphate synthase">
    <location>
        <begin position="1"/>
        <end position="257"/>
    </location>
</feature>
<feature type="active site" description="Proton acceptor" evidence="1">
    <location>
        <position position="42"/>
    </location>
</feature>
<feature type="active site" description="Proton acceptor" evidence="1">
    <location>
        <position position="69"/>
    </location>
</feature>
<feature type="active site" description="Proton donor" evidence="1">
    <location>
        <position position="211"/>
    </location>
</feature>
<feature type="binding site" evidence="1">
    <location>
        <position position="6"/>
    </location>
    <ligand>
        <name>3-amino-2-oxopropyl phosphate</name>
        <dbReference type="ChEBI" id="CHEBI:57279"/>
    </ligand>
</feature>
<feature type="binding site" evidence="1">
    <location>
        <begin position="8"/>
        <end position="9"/>
    </location>
    <ligand>
        <name>1-deoxy-D-xylulose 5-phosphate</name>
        <dbReference type="ChEBI" id="CHEBI:57792"/>
    </ligand>
</feature>
<feature type="binding site" evidence="1">
    <location>
        <position position="17"/>
    </location>
    <ligand>
        <name>3-amino-2-oxopropyl phosphate</name>
        <dbReference type="ChEBI" id="CHEBI:57279"/>
    </ligand>
</feature>
<feature type="binding site" evidence="1">
    <location>
        <position position="44"/>
    </location>
    <ligand>
        <name>1-deoxy-D-xylulose 5-phosphate</name>
        <dbReference type="ChEBI" id="CHEBI:57792"/>
    </ligand>
</feature>
<feature type="binding site" evidence="1">
    <location>
        <position position="49"/>
    </location>
    <ligand>
        <name>1-deoxy-D-xylulose 5-phosphate</name>
        <dbReference type="ChEBI" id="CHEBI:57792"/>
    </ligand>
</feature>
<feature type="binding site" evidence="1">
    <location>
        <position position="99"/>
    </location>
    <ligand>
        <name>1-deoxy-D-xylulose 5-phosphate</name>
        <dbReference type="ChEBI" id="CHEBI:57792"/>
    </ligand>
</feature>
<feature type="binding site" evidence="1">
    <location>
        <position position="212"/>
    </location>
    <ligand>
        <name>3-amino-2-oxopropyl phosphate</name>
        <dbReference type="ChEBI" id="CHEBI:57279"/>
    </ligand>
</feature>
<feature type="binding site" evidence="1">
    <location>
        <begin position="233"/>
        <end position="234"/>
    </location>
    <ligand>
        <name>3-amino-2-oxopropyl phosphate</name>
        <dbReference type="ChEBI" id="CHEBI:57279"/>
    </ligand>
</feature>
<feature type="site" description="Transition state stabilizer" evidence="1">
    <location>
        <position position="148"/>
    </location>
</feature>
<reference key="1">
    <citation type="submission" date="2006-11" db="EMBL/GenBank/DDBJ databases">
        <title>Sequence of Campylobacter fetus subsp. fetus 82-40.</title>
        <authorList>
            <person name="Fouts D.E."/>
            <person name="Nelson K.E."/>
        </authorList>
    </citation>
    <scope>NUCLEOTIDE SEQUENCE [LARGE SCALE GENOMIC DNA]</scope>
    <source>
        <strain>82-40</strain>
    </source>
</reference>
<accession>A0RNS2</accession>
<protein>
    <recommendedName>
        <fullName evidence="1">Pyridoxine 5'-phosphate synthase</fullName>
        <shortName evidence="1">PNP synthase</shortName>
        <ecNumber evidence="1">2.6.99.2</ecNumber>
    </recommendedName>
</protein>
<keyword id="KW-0963">Cytoplasm</keyword>
<keyword id="KW-0664">Pyridoxine biosynthesis</keyword>
<keyword id="KW-0808">Transferase</keyword>